<gene>
    <name type="ordered locus">Os09g0442300</name>
    <name type="ordered locus">LOC_Os09g27030</name>
    <name type="ORF">P0046G12.22</name>
</gene>
<feature type="signal peptide" evidence="5">
    <location>
        <begin position="1"/>
        <end position="24"/>
    </location>
</feature>
<feature type="propeptide" id="PRO_0000026436" description="Activation peptide" evidence="1">
    <location>
        <begin position="25"/>
        <end position="144"/>
    </location>
</feature>
<feature type="chain" id="PRO_0000026437" description="Oryzain gamma chain">
    <location>
        <begin position="145"/>
        <end position="362"/>
    </location>
</feature>
<feature type="active site" evidence="7">
    <location>
        <position position="169"/>
    </location>
</feature>
<feature type="active site" evidence="8">
    <location>
        <position position="309"/>
    </location>
</feature>
<feature type="active site" evidence="9">
    <location>
        <position position="329"/>
    </location>
</feature>
<feature type="glycosylation site" description="N-linked (GlcNAc...) asparagine" evidence="6">
    <location>
        <position position="128"/>
    </location>
</feature>
<feature type="glycosylation site" description="N-linked (GlcNAc...) asparagine" evidence="6">
    <location>
        <position position="258"/>
    </location>
</feature>
<feature type="disulfide bond" evidence="2">
    <location>
        <begin position="166"/>
        <end position="209"/>
    </location>
</feature>
<feature type="disulfide bond" evidence="3">
    <location>
        <begin position="200"/>
        <end position="242"/>
    </location>
</feature>
<feature type="disulfide bond" evidence="3">
    <location>
        <begin position="300"/>
        <end position="350"/>
    </location>
</feature>
<feature type="sequence conflict" description="In Ref. 1; BAA14404." evidence="10" ref="1">
    <original>A</original>
    <variation>V</variation>
    <location>
        <position position="12"/>
    </location>
</feature>
<feature type="sequence conflict" description="In Ref. 1; BAA14404." evidence="10" ref="1">
    <original>D</original>
    <variation>G</variation>
    <location>
        <position position="58"/>
    </location>
</feature>
<feature type="sequence conflict" description="In Ref. 1; BAA14404." evidence="10" ref="1">
    <original>A</original>
    <variation>P</variation>
    <location>
        <position position="143"/>
    </location>
</feature>
<feature type="sequence conflict" description="In Ref. 1; BAA14404." evidence="10" ref="1">
    <original>T</original>
    <variation>P</variation>
    <location>
        <position position="171"/>
    </location>
</feature>
<feature type="sequence conflict" description="In Ref. 1; BAA14404." evidence="10" ref="1">
    <original>A</original>
    <variation>R</variation>
    <location>
        <position position="181"/>
    </location>
</feature>
<feature type="sequence conflict" description="In Ref. 1; BAA14404." evidence="10" ref="1">
    <original>K</original>
    <variation>P</variation>
    <location>
        <position position="188"/>
    </location>
</feature>
<feature type="sequence conflict" description="In Ref. 1; BAA14404." evidence="10" ref="1">
    <original>V</original>
    <variation>A</variation>
    <location>
        <position position="198"/>
    </location>
</feature>
<feature type="sequence conflict" description="In Ref. 1; BAA14404." evidence="10" ref="1">
    <original>A</original>
    <variation>R</variation>
    <location>
        <position position="203"/>
    </location>
</feature>
<feature type="sequence conflict" description="In Ref. 1; BAA14404." evidence="10" ref="1">
    <original>V</original>
    <variation>A</variation>
    <location>
        <position position="249"/>
    </location>
</feature>
<feature type="sequence conflict" description="In Ref. 1; BAA14404." evidence="10" ref="1">
    <original>G</original>
    <variation>V</variation>
    <location>
        <position position="262"/>
    </location>
</feature>
<feature type="sequence conflict" description="In Ref. 1; BAA14404." evidence="10" ref="1">
    <original>K</original>
    <variation>T</variation>
    <location>
        <position position="342"/>
    </location>
</feature>
<reference key="1">
    <citation type="journal article" date="1991" name="J. Biol. Chem.">
        <title>Molecular cloning and gibberellin-induced expression of multiple cysteine proteinases of rice seeds (oryzains).</title>
        <authorList>
            <person name="Watanabe H."/>
            <person name="Abe K."/>
            <person name="Emori Y."/>
            <person name="Hosoyama H."/>
            <person name="Arai S."/>
        </authorList>
    </citation>
    <scope>NUCLEOTIDE SEQUENCE [MRNA]</scope>
    <source>
        <strain>cv. Nipponbare</strain>
        <tissue>Seed</tissue>
    </source>
</reference>
<reference key="2">
    <citation type="journal article" date="2005" name="Nature">
        <title>The map-based sequence of the rice genome.</title>
        <authorList>
            <consortium name="International rice genome sequencing project (IRGSP)"/>
        </authorList>
    </citation>
    <scope>NUCLEOTIDE SEQUENCE [LARGE SCALE GENOMIC DNA]</scope>
    <source>
        <strain>cv. Nipponbare</strain>
    </source>
</reference>
<reference key="3">
    <citation type="journal article" date="2013" name="Rice">
        <title>Improvement of the Oryza sativa Nipponbare reference genome using next generation sequence and optical map data.</title>
        <authorList>
            <person name="Kawahara Y."/>
            <person name="de la Bastide M."/>
            <person name="Hamilton J.P."/>
            <person name="Kanamori H."/>
            <person name="McCombie W.R."/>
            <person name="Ouyang S."/>
            <person name="Schwartz D.C."/>
            <person name="Tanaka T."/>
            <person name="Wu J."/>
            <person name="Zhou S."/>
            <person name="Childs K.L."/>
            <person name="Davidson R.M."/>
            <person name="Lin H."/>
            <person name="Quesada-Ocampo L."/>
            <person name="Vaillancourt B."/>
            <person name="Sakai H."/>
            <person name="Lee S.S."/>
            <person name="Kim J."/>
            <person name="Numa H."/>
            <person name="Itoh T."/>
            <person name="Buell C.R."/>
            <person name="Matsumoto T."/>
        </authorList>
    </citation>
    <scope>GENOME REANNOTATION</scope>
    <source>
        <strain>cv. Nipponbare</strain>
    </source>
</reference>
<accession>P25778</accession>
<accession>Q67UU2</accession>
<protein>
    <recommendedName>
        <fullName>Oryzain gamma chain</fullName>
        <ecNumber evidence="4">3.4.22.-</ecNumber>
    </recommendedName>
</protein>
<organism>
    <name type="scientific">Oryza sativa subsp. japonica</name>
    <name type="common">Rice</name>
    <dbReference type="NCBI Taxonomy" id="39947"/>
    <lineage>
        <taxon>Eukaryota</taxon>
        <taxon>Viridiplantae</taxon>
        <taxon>Streptophyta</taxon>
        <taxon>Embryophyta</taxon>
        <taxon>Tracheophyta</taxon>
        <taxon>Spermatophyta</taxon>
        <taxon>Magnoliopsida</taxon>
        <taxon>Liliopsida</taxon>
        <taxon>Poales</taxon>
        <taxon>Poaceae</taxon>
        <taxon>BOP clade</taxon>
        <taxon>Oryzoideae</taxon>
        <taxon>Oryzeae</taxon>
        <taxon>Oryzinae</taxon>
        <taxon>Oryza</taxon>
        <taxon>Oryza sativa</taxon>
    </lineage>
</organism>
<evidence type="ECO:0000250" key="1">
    <source>
        <dbReference type="UniProtKB" id="P00785"/>
    </source>
</evidence>
<evidence type="ECO:0000250" key="2">
    <source>
        <dbReference type="UniProtKB" id="P07858"/>
    </source>
</evidence>
<evidence type="ECO:0000250" key="3">
    <source>
        <dbReference type="UniProtKB" id="P25250"/>
    </source>
</evidence>
<evidence type="ECO:0000250" key="4">
    <source>
        <dbReference type="UniProtKB" id="P80884"/>
    </source>
</evidence>
<evidence type="ECO:0000255" key="5"/>
<evidence type="ECO:0000255" key="6">
    <source>
        <dbReference type="PROSITE-ProRule" id="PRU00498"/>
    </source>
</evidence>
<evidence type="ECO:0000255" key="7">
    <source>
        <dbReference type="PROSITE-ProRule" id="PRU10088"/>
    </source>
</evidence>
<evidence type="ECO:0000255" key="8">
    <source>
        <dbReference type="PROSITE-ProRule" id="PRU10089"/>
    </source>
</evidence>
<evidence type="ECO:0000255" key="9">
    <source>
        <dbReference type="PROSITE-ProRule" id="PRU10090"/>
    </source>
</evidence>
<evidence type="ECO:0000305" key="10"/>
<keyword id="KW-1015">Disulfide bond</keyword>
<keyword id="KW-0325">Glycoprotein</keyword>
<keyword id="KW-0378">Hydrolase</keyword>
<keyword id="KW-0645">Protease</keyword>
<keyword id="KW-1185">Reference proteome</keyword>
<keyword id="KW-0732">Signal</keyword>
<keyword id="KW-0788">Thiol protease</keyword>
<keyword id="KW-0865">Zymogen</keyword>
<proteinExistence type="evidence at transcript level"/>
<sequence>MAHRRIILLLAAAAVAATSAVAAASSGFDDSNPIRSVTDHAASALESTVIAALGRTRDALRFARFAVRHGKRYGDAAEVQRRFRIFSESLELVRSTNRRGLPYRLGINRFADMSWEEFQASRLGAAQNCSATLAGNHRMRDAAALPETKDWREDGIVSPVKDQGHCGSCWTFSTTGSLEAAYTQATGKPVSLSEQQLVDCATAYNNFGCSGGLPSQAFEYIKYNGGLDTEEAYPYTGVNGICHYKPENVGVKVLDSVNITLGAEDELKNAVGLVRPVSVAFQVINGFRMYKSGVYTSDHCGTSPMDVNHAVLAVGYGVENGVPYWLIKNSWGADWGDNGYFKMEMGKNMCGIATCASYPIVA</sequence>
<dbReference type="EC" id="3.4.22.-" evidence="4"/>
<dbReference type="EMBL" id="D90408">
    <property type="protein sequence ID" value="BAA14404.1"/>
    <property type="molecule type" value="mRNA"/>
</dbReference>
<dbReference type="EMBL" id="AP005419">
    <property type="protein sequence ID" value="BAD38077.1"/>
    <property type="molecule type" value="Genomic_DNA"/>
</dbReference>
<dbReference type="EMBL" id="AP014965">
    <property type="status" value="NOT_ANNOTATED_CDS"/>
    <property type="molecule type" value="Genomic_DNA"/>
</dbReference>
<dbReference type="PIR" id="JU0390">
    <property type="entry name" value="KHRZOG"/>
</dbReference>
<dbReference type="RefSeq" id="XP_015611626.1">
    <property type="nucleotide sequence ID" value="XM_015756140.1"/>
</dbReference>
<dbReference type="SMR" id="P25778"/>
<dbReference type="FunCoup" id="P25778">
    <property type="interactions" value="444"/>
</dbReference>
<dbReference type="IntAct" id="P25778">
    <property type="interactions" value="1"/>
</dbReference>
<dbReference type="STRING" id="39947.P25778"/>
<dbReference type="MEROPS" id="C01.041"/>
<dbReference type="PaxDb" id="39947-P25778"/>
<dbReference type="eggNOG" id="KOG1543">
    <property type="taxonomic scope" value="Eukaryota"/>
</dbReference>
<dbReference type="HOGENOM" id="CLU_012184_1_1_1"/>
<dbReference type="InParanoid" id="P25778"/>
<dbReference type="OrthoDB" id="10253408at2759"/>
<dbReference type="Proteomes" id="UP000000763">
    <property type="component" value="Chromosome 9"/>
</dbReference>
<dbReference type="Proteomes" id="UP000059680">
    <property type="component" value="Chromosome 9"/>
</dbReference>
<dbReference type="GO" id="GO:0005615">
    <property type="term" value="C:extracellular space"/>
    <property type="evidence" value="ECO:0000318"/>
    <property type="project" value="GO_Central"/>
</dbReference>
<dbReference type="GO" id="GO:0005764">
    <property type="term" value="C:lysosome"/>
    <property type="evidence" value="ECO:0000318"/>
    <property type="project" value="GO_Central"/>
</dbReference>
<dbReference type="GO" id="GO:0004197">
    <property type="term" value="F:cysteine-type endopeptidase activity"/>
    <property type="evidence" value="ECO:0000318"/>
    <property type="project" value="GO_Central"/>
</dbReference>
<dbReference type="GO" id="GO:0006955">
    <property type="term" value="P:immune response"/>
    <property type="evidence" value="ECO:0000318"/>
    <property type="project" value="GO_Central"/>
</dbReference>
<dbReference type="GO" id="GO:2001235">
    <property type="term" value="P:positive regulation of apoptotic signaling pathway"/>
    <property type="evidence" value="ECO:0000318"/>
    <property type="project" value="GO_Central"/>
</dbReference>
<dbReference type="GO" id="GO:0051603">
    <property type="term" value="P:proteolysis involved in protein catabolic process"/>
    <property type="evidence" value="ECO:0000318"/>
    <property type="project" value="GO_Central"/>
</dbReference>
<dbReference type="CDD" id="cd02248">
    <property type="entry name" value="Peptidase_C1A"/>
    <property type="match status" value="1"/>
</dbReference>
<dbReference type="FunFam" id="3.90.70.10:FF:000039">
    <property type="entry name" value="Cysteine proteinase 2, putative"/>
    <property type="match status" value="1"/>
</dbReference>
<dbReference type="Gene3D" id="3.90.70.10">
    <property type="entry name" value="Cysteine proteinases"/>
    <property type="match status" value="1"/>
</dbReference>
<dbReference type="InterPro" id="IPR038765">
    <property type="entry name" value="Papain-like_cys_pep_sf"/>
</dbReference>
<dbReference type="InterPro" id="IPR025661">
    <property type="entry name" value="Pept_asp_AS"/>
</dbReference>
<dbReference type="InterPro" id="IPR000169">
    <property type="entry name" value="Pept_cys_AS"/>
</dbReference>
<dbReference type="InterPro" id="IPR025660">
    <property type="entry name" value="Pept_his_AS"/>
</dbReference>
<dbReference type="InterPro" id="IPR013128">
    <property type="entry name" value="Peptidase_C1A"/>
</dbReference>
<dbReference type="InterPro" id="IPR000668">
    <property type="entry name" value="Peptidase_C1A_C"/>
</dbReference>
<dbReference type="InterPro" id="IPR039417">
    <property type="entry name" value="Peptidase_C1A_papain-like"/>
</dbReference>
<dbReference type="InterPro" id="IPR013201">
    <property type="entry name" value="Prot_inhib_I29"/>
</dbReference>
<dbReference type="PANTHER" id="PTHR12411">
    <property type="entry name" value="CYSTEINE PROTEASE FAMILY C1-RELATED"/>
    <property type="match status" value="1"/>
</dbReference>
<dbReference type="Pfam" id="PF08246">
    <property type="entry name" value="Inhibitor_I29"/>
    <property type="match status" value="1"/>
</dbReference>
<dbReference type="Pfam" id="PF00112">
    <property type="entry name" value="Peptidase_C1"/>
    <property type="match status" value="1"/>
</dbReference>
<dbReference type="PRINTS" id="PR00705">
    <property type="entry name" value="PAPAIN"/>
</dbReference>
<dbReference type="SMART" id="SM00848">
    <property type="entry name" value="Inhibitor_I29"/>
    <property type="match status" value="1"/>
</dbReference>
<dbReference type="SMART" id="SM00645">
    <property type="entry name" value="Pept_C1"/>
    <property type="match status" value="1"/>
</dbReference>
<dbReference type="SUPFAM" id="SSF54001">
    <property type="entry name" value="Cysteine proteinases"/>
    <property type="match status" value="1"/>
</dbReference>
<dbReference type="PROSITE" id="PS00640">
    <property type="entry name" value="THIOL_PROTEASE_ASN"/>
    <property type="match status" value="1"/>
</dbReference>
<dbReference type="PROSITE" id="PS00139">
    <property type="entry name" value="THIOL_PROTEASE_CYS"/>
    <property type="match status" value="1"/>
</dbReference>
<dbReference type="PROSITE" id="PS00639">
    <property type="entry name" value="THIOL_PROTEASE_HIS"/>
    <property type="match status" value="1"/>
</dbReference>
<name>ORYC_ORYSJ</name>
<comment type="tissue specificity">
    <text>Expressed only in seeds.</text>
</comment>
<comment type="induction">
    <text>By gibberellic acid (GA).</text>
</comment>
<comment type="similarity">
    <text evidence="7 8 9">Belongs to the peptidase C1 family.</text>
</comment>